<evidence type="ECO:0000255" key="1">
    <source>
        <dbReference type="HAMAP-Rule" id="MF_00117"/>
    </source>
</evidence>
<reference key="1">
    <citation type="journal article" date="2001" name="Proc. Natl. Acad. Sci. U.S.A.">
        <title>Complete genome sequence of an M1 strain of Streptococcus pyogenes.</title>
        <authorList>
            <person name="Ferretti J.J."/>
            <person name="McShan W.M."/>
            <person name="Ajdic D.J."/>
            <person name="Savic D.J."/>
            <person name="Savic G."/>
            <person name="Lyon K."/>
            <person name="Primeaux C."/>
            <person name="Sezate S."/>
            <person name="Suvorov A.N."/>
            <person name="Kenton S."/>
            <person name="Lai H.S."/>
            <person name="Lin S.P."/>
            <person name="Qian Y."/>
            <person name="Jia H.G."/>
            <person name="Najar F.Z."/>
            <person name="Ren Q."/>
            <person name="Zhu H."/>
            <person name="Song L."/>
            <person name="White J."/>
            <person name="Yuan X."/>
            <person name="Clifton S.W."/>
            <person name="Roe B.A."/>
            <person name="McLaughlin R.E."/>
        </authorList>
    </citation>
    <scope>NUCLEOTIDE SEQUENCE [LARGE SCALE GENOMIC DNA]</scope>
    <source>
        <strain>ATCC 700294 / SF370 / Serotype M1</strain>
    </source>
</reference>
<reference key="2">
    <citation type="journal article" date="2005" name="J. Infect. Dis.">
        <title>Evolutionary origin and emergence of a highly successful clone of serotype M1 group A Streptococcus involved multiple horizontal gene transfer events.</title>
        <authorList>
            <person name="Sumby P."/>
            <person name="Porcella S.F."/>
            <person name="Madrigal A.G."/>
            <person name="Barbian K.D."/>
            <person name="Virtaneva K."/>
            <person name="Ricklefs S.M."/>
            <person name="Sturdevant D.E."/>
            <person name="Graham M.R."/>
            <person name="Vuopio-Varkila J."/>
            <person name="Hoe N.P."/>
            <person name="Musser J.M."/>
        </authorList>
    </citation>
    <scope>NUCLEOTIDE SEQUENCE [LARGE SCALE GENOMIC DNA]</scope>
    <source>
        <strain>ATCC BAA-947 / MGAS5005 / Serotype M1</strain>
    </source>
</reference>
<comment type="function">
    <text evidence="1">Redox regulated molecular chaperone. Protects both thermally unfolding and oxidatively damaged proteins from irreversible aggregation. Plays an important role in the bacterial defense system toward oxidative stress.</text>
</comment>
<comment type="subcellular location">
    <subcellularLocation>
        <location evidence="1">Cytoplasm</location>
    </subcellularLocation>
</comment>
<comment type="PTM">
    <text evidence="1">Under oxidizing conditions two disulfide bonds are formed involving the reactive cysteines. Under reducing conditions zinc is bound to the reactive cysteines and the protein is inactive.</text>
</comment>
<comment type="similarity">
    <text evidence="1">Belongs to the HSP33 family.</text>
</comment>
<accession>P0C0C3</accession>
<accession>Q491J4</accession>
<accession>Q9ZB45</accession>
<feature type="chain" id="PRO_0000192212" description="33 kDa chaperonin">
    <location>
        <begin position="1"/>
        <end position="290"/>
    </location>
</feature>
<feature type="disulfide bond" description="Redox-active" evidence="1">
    <location>
        <begin position="235"/>
        <end position="237"/>
    </location>
</feature>
<feature type="disulfide bond" description="Redox-active" evidence="1">
    <location>
        <begin position="268"/>
        <end position="271"/>
    </location>
</feature>
<dbReference type="EMBL" id="AE004092">
    <property type="protein sequence ID" value="AAK33235.1"/>
    <property type="molecule type" value="Genomic_DNA"/>
</dbReference>
<dbReference type="EMBL" id="CP000017">
    <property type="protein sequence ID" value="AAZ50724.1"/>
    <property type="molecule type" value="Genomic_DNA"/>
</dbReference>
<dbReference type="RefSeq" id="NP_268514.1">
    <property type="nucleotide sequence ID" value="NC_002737.2"/>
</dbReference>
<dbReference type="SMR" id="P0C0C3"/>
<dbReference type="PaxDb" id="1314-HKU360_00150"/>
<dbReference type="KEGG" id="spy:SPy_0123"/>
<dbReference type="KEGG" id="spz:M5005_Spy0105"/>
<dbReference type="PATRIC" id="fig|160490.10.peg.105"/>
<dbReference type="HOGENOM" id="CLU_054493_1_0_9"/>
<dbReference type="OMA" id="DMQCECC"/>
<dbReference type="Proteomes" id="UP000000750">
    <property type="component" value="Chromosome"/>
</dbReference>
<dbReference type="GO" id="GO:0005737">
    <property type="term" value="C:cytoplasm"/>
    <property type="evidence" value="ECO:0007669"/>
    <property type="project" value="UniProtKB-SubCell"/>
</dbReference>
<dbReference type="GO" id="GO:0044183">
    <property type="term" value="F:protein folding chaperone"/>
    <property type="evidence" value="ECO:0007669"/>
    <property type="project" value="TreeGrafter"/>
</dbReference>
<dbReference type="GO" id="GO:0051082">
    <property type="term" value="F:unfolded protein binding"/>
    <property type="evidence" value="ECO:0007669"/>
    <property type="project" value="UniProtKB-UniRule"/>
</dbReference>
<dbReference type="GO" id="GO:0042026">
    <property type="term" value="P:protein refolding"/>
    <property type="evidence" value="ECO:0007669"/>
    <property type="project" value="TreeGrafter"/>
</dbReference>
<dbReference type="CDD" id="cd00498">
    <property type="entry name" value="Hsp33"/>
    <property type="match status" value="1"/>
</dbReference>
<dbReference type="Gene3D" id="3.55.30.10">
    <property type="entry name" value="Hsp33 domain"/>
    <property type="match status" value="1"/>
</dbReference>
<dbReference type="Gene3D" id="3.90.1280.10">
    <property type="entry name" value="HSP33 redox switch-like"/>
    <property type="match status" value="1"/>
</dbReference>
<dbReference type="HAMAP" id="MF_00117">
    <property type="entry name" value="HslO"/>
    <property type="match status" value="1"/>
</dbReference>
<dbReference type="InterPro" id="IPR000397">
    <property type="entry name" value="Heat_shock_Hsp33"/>
</dbReference>
<dbReference type="InterPro" id="IPR016154">
    <property type="entry name" value="Heat_shock_Hsp33_C"/>
</dbReference>
<dbReference type="InterPro" id="IPR016153">
    <property type="entry name" value="Heat_shock_Hsp33_N"/>
</dbReference>
<dbReference type="NCBIfam" id="NF001033">
    <property type="entry name" value="PRK00114.1"/>
    <property type="match status" value="1"/>
</dbReference>
<dbReference type="PANTHER" id="PTHR30111">
    <property type="entry name" value="33 KDA CHAPERONIN"/>
    <property type="match status" value="1"/>
</dbReference>
<dbReference type="PANTHER" id="PTHR30111:SF1">
    <property type="entry name" value="33 KDA CHAPERONIN"/>
    <property type="match status" value="1"/>
</dbReference>
<dbReference type="Pfam" id="PF01430">
    <property type="entry name" value="HSP33"/>
    <property type="match status" value="1"/>
</dbReference>
<dbReference type="PIRSF" id="PIRSF005261">
    <property type="entry name" value="Heat_shock_Hsp33"/>
    <property type="match status" value="1"/>
</dbReference>
<dbReference type="SUPFAM" id="SSF64397">
    <property type="entry name" value="Hsp33 domain"/>
    <property type="match status" value="1"/>
</dbReference>
<dbReference type="SUPFAM" id="SSF118352">
    <property type="entry name" value="HSP33 redox switch-like"/>
    <property type="match status" value="1"/>
</dbReference>
<gene>
    <name evidence="1" type="primary">hslO</name>
    <name type="ordered locus">SPy_0123</name>
    <name type="ordered locus">M5005_Spy0105</name>
</gene>
<name>HSLO_STRP1</name>
<keyword id="KW-0143">Chaperone</keyword>
<keyword id="KW-0963">Cytoplasm</keyword>
<keyword id="KW-1015">Disulfide bond</keyword>
<keyword id="KW-0676">Redox-active center</keyword>
<keyword id="KW-1185">Reference proteome</keyword>
<keyword id="KW-0862">Zinc</keyword>
<protein>
    <recommendedName>
        <fullName evidence="1">33 kDa chaperonin</fullName>
    </recommendedName>
    <alternativeName>
        <fullName evidence="1">Heat shock protein 33 homolog</fullName>
        <shortName evidence="1">HSP33</shortName>
    </alternativeName>
</protein>
<proteinExistence type="inferred from homology"/>
<organism>
    <name type="scientific">Streptococcus pyogenes serotype M1</name>
    <dbReference type="NCBI Taxonomy" id="301447"/>
    <lineage>
        <taxon>Bacteria</taxon>
        <taxon>Bacillati</taxon>
        <taxon>Bacillota</taxon>
        <taxon>Bacilli</taxon>
        <taxon>Lactobacillales</taxon>
        <taxon>Streptococcaceae</taxon>
        <taxon>Streptococcus</taxon>
    </lineage>
</organism>
<sequence length="290" mass="31452">MDKIIKSIAQSGAFRAYVLDSTETVALAQEKHNTLSSSTVALGRTLIANQILAANQKGDSKITVKVIGDSSFGHIISVADTKGHVKGYIQNTGVDIKKTATGEVLVGPFMGNGHFVTIIDYGTGNPYTSTTPLITGEIGEDFAYYLTESEQTPSAIGLNVLLDENDKVKVAGGFMVQVLPGASEEEIARYEKRLQEMPAISHLLASKNHVDALLEAIYGDEPYKRLSEEPLSFQCDCSRERFEAALMTLPKADLQAMIDEDKGAEIVCQFCGTKYQFNESDLEAIISDKA</sequence>